<gene>
    <name evidence="1" type="primary">TRM5</name>
    <name type="ORF">NECHADRAFT_98685</name>
</gene>
<organism>
    <name type="scientific">Fusarium vanettenii (strain ATCC MYA-4622 / CBS 123669 / FGSC 9596 / NRRL 45880 / 77-13-4)</name>
    <name type="common">Fusarium solani subsp. pisi</name>
    <dbReference type="NCBI Taxonomy" id="660122"/>
    <lineage>
        <taxon>Eukaryota</taxon>
        <taxon>Fungi</taxon>
        <taxon>Dikarya</taxon>
        <taxon>Ascomycota</taxon>
        <taxon>Pezizomycotina</taxon>
        <taxon>Sordariomycetes</taxon>
        <taxon>Hypocreomycetidae</taxon>
        <taxon>Hypocreales</taxon>
        <taxon>Nectriaceae</taxon>
        <taxon>Fusarium</taxon>
        <taxon>Fusarium solani species complex</taxon>
        <taxon>Fusarium vanettenii</taxon>
    </lineage>
</organism>
<accession>C7YK87</accession>
<name>TRM5_FUSV7</name>
<keyword id="KW-0963">Cytoplasm</keyword>
<keyword id="KW-0489">Methyltransferase</keyword>
<keyword id="KW-0496">Mitochondrion</keyword>
<keyword id="KW-0539">Nucleus</keyword>
<keyword id="KW-1185">Reference proteome</keyword>
<keyword id="KW-0949">S-adenosyl-L-methionine</keyword>
<keyword id="KW-0808">Transferase</keyword>
<keyword id="KW-0809">Transit peptide</keyword>
<keyword id="KW-0819">tRNA processing</keyword>
<sequence length="465" mass="52510">MDKNSQLRDMNLFRAPAARAAKTLDRSVFAKTLNAAAASISENRLLSKYRKELEKTQEVLFMERFNPILPDPDPSLASQGRKCIVLSPQIKPASPETWSPTLQEASKLGELKVVPYDLEITYDFWNYFDVVKSILPEELHGEIPSGFNTVGHVAHLNIRDQYLPYKNIIAQVLLDKNPHIKTVINKIDNVGSENEFRTFAYEVLGGPDNMNVEVSEAGCIFRFDYSKVYWNSKLDTEHKRITSFFKPGEVVADVMAGIGPFAVPAGKKGVFVWANDKNPESHRYLEDAIQKNKVWEFVKPFNHDGHDFIRTSADLVLEASKRGDCAVIKPPRPPRKSAAPPPEPVRVPVPPTISHFVMNLPASAIEFLHNYRGLYHGHEDLFEPHTETKLPIVHVHCFSAKMDDDTPLKDICERIHKEIGVMLKPGDAEKEGEVLIYDVRDVAPAKRMFCASFRLPREVAFAARA</sequence>
<evidence type="ECO:0000255" key="1">
    <source>
        <dbReference type="HAMAP-Rule" id="MF_03152"/>
    </source>
</evidence>
<evidence type="ECO:0000256" key="2">
    <source>
        <dbReference type="SAM" id="MobiDB-lite"/>
    </source>
</evidence>
<evidence type="ECO:0000305" key="3"/>
<reference key="1">
    <citation type="journal article" date="2009" name="PLoS Genet.">
        <title>The genome of Nectria haematococca: contribution of supernumerary chromosomes to gene expansion.</title>
        <authorList>
            <person name="Coleman J.J."/>
            <person name="Rounsley S.D."/>
            <person name="Rodriguez-Carres M."/>
            <person name="Kuo A."/>
            <person name="Wasmann C.C."/>
            <person name="Grimwood J."/>
            <person name="Schmutz J."/>
            <person name="Taga M."/>
            <person name="White G.J."/>
            <person name="Zhou S."/>
            <person name="Schwartz D.C."/>
            <person name="Freitag M."/>
            <person name="Ma L.-J."/>
            <person name="Danchin E.G.J."/>
            <person name="Henrissat B."/>
            <person name="Coutinho P.M."/>
            <person name="Nelson D.R."/>
            <person name="Straney D."/>
            <person name="Napoli C.A."/>
            <person name="Barker B.M."/>
            <person name="Gribskov M."/>
            <person name="Rep M."/>
            <person name="Kroken S."/>
            <person name="Molnar I."/>
            <person name="Rensing C."/>
            <person name="Kennell J.C."/>
            <person name="Zamora J."/>
            <person name="Farman M.L."/>
            <person name="Selker E.U."/>
            <person name="Salamov A."/>
            <person name="Shapiro H."/>
            <person name="Pangilinan J."/>
            <person name="Lindquist E."/>
            <person name="Lamers C."/>
            <person name="Grigoriev I.V."/>
            <person name="Geiser D.M."/>
            <person name="Covert S.F."/>
            <person name="Temporini E."/>
            <person name="VanEtten H.D."/>
        </authorList>
    </citation>
    <scope>NUCLEOTIDE SEQUENCE [LARGE SCALE GENOMIC DNA]</scope>
    <source>
        <strain>ATCC MYA-4622 / CBS 123669 / FGSC 9596 / NRRL 45880 / 77-13-4</strain>
    </source>
</reference>
<protein>
    <recommendedName>
        <fullName evidence="1">tRNA (guanine(37)-N(1))-methyltransferase</fullName>
        <ecNumber evidence="1">2.1.1.228</ecNumber>
    </recommendedName>
    <alternativeName>
        <fullName evidence="1">M1G-methyltransferase</fullName>
    </alternativeName>
    <alternativeName>
        <fullName evidence="1">tRNA [GM37] methyltransferase</fullName>
    </alternativeName>
    <alternativeName>
        <fullName evidence="1">tRNA methyltransferase 5</fullName>
    </alternativeName>
</protein>
<comment type="function">
    <text evidence="1">Specifically methylates the N1 position of guanosine-37 in various cytoplasmic and mitochondrial tRNAs. Methylation is not dependent on the nature of the nucleoside 5' of the target nucleoside. This is the first step in the biosynthesis of wybutosine (yW), a modified base adjacent to the anticodon of tRNAs and required for accurate decoding.</text>
</comment>
<comment type="catalytic activity">
    <reaction evidence="1">
        <text>guanosine(37) in tRNA + S-adenosyl-L-methionine = N(1)-methylguanosine(37) in tRNA + S-adenosyl-L-homocysteine + H(+)</text>
        <dbReference type="Rhea" id="RHEA:36899"/>
        <dbReference type="Rhea" id="RHEA-COMP:10145"/>
        <dbReference type="Rhea" id="RHEA-COMP:10147"/>
        <dbReference type="ChEBI" id="CHEBI:15378"/>
        <dbReference type="ChEBI" id="CHEBI:57856"/>
        <dbReference type="ChEBI" id="CHEBI:59789"/>
        <dbReference type="ChEBI" id="CHEBI:73542"/>
        <dbReference type="ChEBI" id="CHEBI:74269"/>
        <dbReference type="EC" id="2.1.1.228"/>
    </reaction>
</comment>
<comment type="subunit">
    <text evidence="1">Monomer.</text>
</comment>
<comment type="subcellular location">
    <subcellularLocation>
        <location evidence="1">Mitochondrion matrix</location>
    </subcellularLocation>
    <subcellularLocation>
        <location evidence="1">Nucleus</location>
    </subcellularLocation>
    <subcellularLocation>
        <location evidence="1">Cytoplasm</location>
    </subcellularLocation>
    <text evidence="1">Predominantly in the mitochondria and in the nucleus.</text>
</comment>
<comment type="similarity">
    <text evidence="3">Belongs to the class I-like SAM-binding methyltransferase superfamily. TRM5/TYW2 family.</text>
</comment>
<feature type="transit peptide" description="Mitochondrion" evidence="1">
    <location>
        <begin position="1"/>
        <end position="20"/>
    </location>
</feature>
<feature type="chain" id="PRO_0000414166" description="tRNA (guanine(37)-N(1))-methyltransferase">
    <location>
        <begin position="21"/>
        <end position="465"/>
    </location>
</feature>
<feature type="region of interest" description="Disordered" evidence="2">
    <location>
        <begin position="326"/>
        <end position="345"/>
    </location>
</feature>
<feature type="binding site" evidence="1">
    <location>
        <position position="238"/>
    </location>
    <ligand>
        <name>S-adenosyl-L-methionine</name>
        <dbReference type="ChEBI" id="CHEBI:59789"/>
    </ligand>
</feature>
<feature type="binding site" evidence="1">
    <location>
        <begin position="304"/>
        <end position="305"/>
    </location>
    <ligand>
        <name>S-adenosyl-L-methionine</name>
        <dbReference type="ChEBI" id="CHEBI:59789"/>
    </ligand>
</feature>
<feature type="binding site" evidence="1">
    <location>
        <position position="359"/>
    </location>
    <ligand>
        <name>S-adenosyl-L-methionine</name>
        <dbReference type="ChEBI" id="CHEBI:59789"/>
    </ligand>
</feature>
<dbReference type="EC" id="2.1.1.228" evidence="1"/>
<dbReference type="EMBL" id="GG698896">
    <property type="protein sequence ID" value="EEU48404.1"/>
    <property type="molecule type" value="Genomic_DNA"/>
</dbReference>
<dbReference type="RefSeq" id="XP_003054117.1">
    <property type="nucleotide sequence ID" value="XM_003054071.1"/>
</dbReference>
<dbReference type="FunCoup" id="C7YK87">
    <property type="interactions" value="1094"/>
</dbReference>
<dbReference type="EnsemblFungi" id="NechaT98685">
    <property type="protein sequence ID" value="NechaP98685"/>
    <property type="gene ID" value="NechaG98685"/>
</dbReference>
<dbReference type="GeneID" id="9664123"/>
<dbReference type="KEGG" id="nhe:NECHADRAFT_98685"/>
<dbReference type="VEuPathDB" id="FungiDB:NECHADRAFT_98685"/>
<dbReference type="eggNOG" id="KOG2078">
    <property type="taxonomic scope" value="Eukaryota"/>
</dbReference>
<dbReference type="HOGENOM" id="CLU_022610_2_2_1"/>
<dbReference type="InParanoid" id="C7YK87"/>
<dbReference type="OMA" id="VGSHSQF"/>
<dbReference type="OrthoDB" id="408788at2759"/>
<dbReference type="Proteomes" id="UP000005206">
    <property type="component" value="Unassembled WGS sequence"/>
</dbReference>
<dbReference type="GO" id="GO:0005759">
    <property type="term" value="C:mitochondrial matrix"/>
    <property type="evidence" value="ECO:0007669"/>
    <property type="project" value="UniProtKB-SubCell"/>
</dbReference>
<dbReference type="GO" id="GO:0005634">
    <property type="term" value="C:nucleus"/>
    <property type="evidence" value="ECO:0007669"/>
    <property type="project" value="UniProtKB-SubCell"/>
</dbReference>
<dbReference type="GO" id="GO:0052906">
    <property type="term" value="F:tRNA (guanine(37)-N1)-methyltransferase activity"/>
    <property type="evidence" value="ECO:0007669"/>
    <property type="project" value="UniProtKB-UniRule"/>
</dbReference>
<dbReference type="GO" id="GO:0070901">
    <property type="term" value="P:mitochondrial tRNA methylation"/>
    <property type="evidence" value="ECO:0007669"/>
    <property type="project" value="TreeGrafter"/>
</dbReference>
<dbReference type="GO" id="GO:0002939">
    <property type="term" value="P:tRNA N1-guanine methylation"/>
    <property type="evidence" value="ECO:0007669"/>
    <property type="project" value="TreeGrafter"/>
</dbReference>
<dbReference type="FunFam" id="3.30.300.110:FF:000001">
    <property type="entry name" value="tRNA (guanine(37)-N1)-methyltransferase"/>
    <property type="match status" value="1"/>
</dbReference>
<dbReference type="Gene3D" id="3.30.300.110">
    <property type="entry name" value="Met-10+ protein-like domains"/>
    <property type="match status" value="1"/>
</dbReference>
<dbReference type="Gene3D" id="3.40.50.150">
    <property type="entry name" value="Vaccinia Virus protein VP39"/>
    <property type="match status" value="1"/>
</dbReference>
<dbReference type="HAMAP" id="MF_03152">
    <property type="entry name" value="TRM5"/>
    <property type="match status" value="1"/>
</dbReference>
<dbReference type="InterPro" id="IPR030382">
    <property type="entry name" value="MeTrfase_TRM5/TYW2"/>
</dbReference>
<dbReference type="InterPro" id="IPR029063">
    <property type="entry name" value="SAM-dependent_MTases_sf"/>
</dbReference>
<dbReference type="InterPro" id="IPR056743">
    <property type="entry name" value="TRM5-TYW2-like_MTfase"/>
</dbReference>
<dbReference type="InterPro" id="IPR056744">
    <property type="entry name" value="TRM5/TYW2-like_N"/>
</dbReference>
<dbReference type="InterPro" id="IPR025792">
    <property type="entry name" value="tRNA_Gua_MeTrfase_euk"/>
</dbReference>
<dbReference type="PANTHER" id="PTHR23245:SF36">
    <property type="entry name" value="TRNA (GUANINE(37)-N1)-METHYLTRANSFERASE"/>
    <property type="match status" value="1"/>
</dbReference>
<dbReference type="PANTHER" id="PTHR23245">
    <property type="entry name" value="TRNA METHYLTRANSFERASE"/>
    <property type="match status" value="1"/>
</dbReference>
<dbReference type="Pfam" id="PF02475">
    <property type="entry name" value="TRM5-TYW2_MTfase"/>
    <property type="match status" value="1"/>
</dbReference>
<dbReference type="Pfam" id="PF25133">
    <property type="entry name" value="TYW2_N_2"/>
    <property type="match status" value="1"/>
</dbReference>
<dbReference type="SUPFAM" id="SSF53335">
    <property type="entry name" value="S-adenosyl-L-methionine-dependent methyltransferases"/>
    <property type="match status" value="1"/>
</dbReference>
<dbReference type="PROSITE" id="PS51684">
    <property type="entry name" value="SAM_MT_TRM5_TYW2"/>
    <property type="match status" value="1"/>
</dbReference>
<proteinExistence type="inferred from homology"/>